<dbReference type="EMBL" id="AJ297823">
    <property type="protein sequence ID" value="CAC51114.1"/>
    <property type="molecule type" value="mRNA"/>
</dbReference>
<dbReference type="EMBL" id="AJ297824">
    <property type="protein sequence ID" value="CAC51115.1"/>
    <property type="molecule type" value="Genomic_DNA"/>
</dbReference>
<dbReference type="EMBL" id="AK000444">
    <property type="protein sequence ID" value="BAA91170.1"/>
    <property type="molecule type" value="mRNA"/>
</dbReference>
<dbReference type="EMBL" id="AK294463">
    <property type="protein sequence ID" value="BAH11777.1"/>
    <property type="molecule type" value="mRNA"/>
</dbReference>
<dbReference type="EMBL" id="AF131216">
    <property type="status" value="NOT_ANNOTATED_CDS"/>
    <property type="molecule type" value="Genomic_DNA"/>
</dbReference>
<dbReference type="EMBL" id="BC022003">
    <property type="protein sequence ID" value="AAH22003.1"/>
    <property type="molecule type" value="mRNA"/>
</dbReference>
<dbReference type="EMBL" id="BC034990">
    <property type="protein sequence ID" value="AAH34990.1"/>
    <property type="molecule type" value="mRNA"/>
</dbReference>
<dbReference type="EMBL" id="BC093788">
    <property type="protein sequence ID" value="AAH93788.1"/>
    <property type="molecule type" value="mRNA"/>
</dbReference>
<dbReference type="EMBL" id="BC101623">
    <property type="protein sequence ID" value="AAI01624.1"/>
    <property type="molecule type" value="mRNA"/>
</dbReference>
<dbReference type="CCDS" id="CCDS5979.1">
    <molecule id="Q96QG7-1"/>
</dbReference>
<dbReference type="RefSeq" id="NP_056273.2">
    <molecule id="Q96QG7-1"/>
    <property type="nucleotide sequence ID" value="NM_015458.3"/>
</dbReference>
<dbReference type="SMR" id="Q96QG7"/>
<dbReference type="BioGRID" id="122455">
    <property type="interactions" value="70"/>
</dbReference>
<dbReference type="DIP" id="DIP-54283N"/>
<dbReference type="FunCoup" id="Q96QG7">
    <property type="interactions" value="1881"/>
</dbReference>
<dbReference type="IntAct" id="Q96QG7">
    <property type="interactions" value="53"/>
</dbReference>
<dbReference type="MINT" id="Q96QG7"/>
<dbReference type="STRING" id="9606.ENSP00000221086"/>
<dbReference type="DEPOD" id="MTMR9"/>
<dbReference type="iPTMnet" id="Q96QG7"/>
<dbReference type="PhosphoSitePlus" id="Q96QG7"/>
<dbReference type="BioMuta" id="MTMR9"/>
<dbReference type="DMDM" id="33112393"/>
<dbReference type="jPOST" id="Q96QG7"/>
<dbReference type="MassIVE" id="Q96QG7"/>
<dbReference type="PaxDb" id="9606-ENSP00000221086"/>
<dbReference type="PeptideAtlas" id="Q96QG7"/>
<dbReference type="ProteomicsDB" id="6422"/>
<dbReference type="ProteomicsDB" id="77877">
    <molecule id="Q96QG7-1"/>
</dbReference>
<dbReference type="Pumba" id="Q96QG7"/>
<dbReference type="Antibodypedia" id="22096">
    <property type="antibodies" value="119 antibodies from 28 providers"/>
</dbReference>
<dbReference type="DNASU" id="66036"/>
<dbReference type="Ensembl" id="ENST00000221086.8">
    <molecule id="Q96QG7-1"/>
    <property type="protein sequence ID" value="ENSP00000221086.3"/>
    <property type="gene ID" value="ENSG00000104643.10"/>
</dbReference>
<dbReference type="Ensembl" id="ENST00000526292.1">
    <molecule id="Q96QG7-2"/>
    <property type="protein sequence ID" value="ENSP00000433239.1"/>
    <property type="gene ID" value="ENSG00000104643.10"/>
</dbReference>
<dbReference type="Ensembl" id="ENST00000644306.3">
    <molecule id="Q96QG7-1"/>
    <property type="protein sequence ID" value="ENSP00000495551.2"/>
    <property type="gene ID" value="ENSG00000285032.3"/>
</dbReference>
<dbReference type="Ensembl" id="ENST00000646141.3">
    <molecule id="Q96QG7-2"/>
    <property type="protein sequence ID" value="ENSP00000496677.3"/>
    <property type="gene ID" value="ENSG00000285032.3"/>
</dbReference>
<dbReference type="GeneID" id="66036"/>
<dbReference type="KEGG" id="hsa:66036"/>
<dbReference type="MANE-Select" id="ENST00000221086.8">
    <property type="protein sequence ID" value="ENSP00000221086.3"/>
    <property type="RefSeq nucleotide sequence ID" value="NM_015458.4"/>
    <property type="RefSeq protein sequence ID" value="NP_056273.2"/>
</dbReference>
<dbReference type="UCSC" id="uc003wtm.4">
    <molecule id="Q96QG7-1"/>
    <property type="organism name" value="human"/>
</dbReference>
<dbReference type="AGR" id="HGNC:14596"/>
<dbReference type="CTD" id="66036"/>
<dbReference type="DisGeNET" id="66036"/>
<dbReference type="GeneCards" id="MTMR9"/>
<dbReference type="HGNC" id="HGNC:14596">
    <property type="gene designation" value="MTMR9"/>
</dbReference>
<dbReference type="HPA" id="ENSG00000104643">
    <property type="expression patterns" value="Low tissue specificity"/>
</dbReference>
<dbReference type="MIM" id="606260">
    <property type="type" value="gene"/>
</dbReference>
<dbReference type="neXtProt" id="NX_Q96QG7"/>
<dbReference type="OpenTargets" id="ENSG00000104643"/>
<dbReference type="PharmGKB" id="PA37904"/>
<dbReference type="VEuPathDB" id="HostDB:ENSG00000104643"/>
<dbReference type="eggNOG" id="KOG1089">
    <property type="taxonomic scope" value="Eukaryota"/>
</dbReference>
<dbReference type="GeneTree" id="ENSGT00940000157818"/>
<dbReference type="HOGENOM" id="CLU_001839_3_1_1"/>
<dbReference type="InParanoid" id="Q96QG7"/>
<dbReference type="OMA" id="IEREWIC"/>
<dbReference type="OrthoDB" id="271628at2759"/>
<dbReference type="PAN-GO" id="Q96QG7">
    <property type="GO annotations" value="5 GO annotations based on evolutionary models"/>
</dbReference>
<dbReference type="PhylomeDB" id="Q96QG7"/>
<dbReference type="TreeFam" id="TF315197"/>
<dbReference type="PathwayCommons" id="Q96QG7"/>
<dbReference type="Reactome" id="R-HSA-1660499">
    <property type="pathway name" value="Synthesis of PIPs at the plasma membrane"/>
</dbReference>
<dbReference type="Reactome" id="R-HSA-1660517">
    <property type="pathway name" value="Synthesis of PIPs at the late endosome membrane"/>
</dbReference>
<dbReference type="Reactome" id="R-HSA-1855183">
    <property type="pathway name" value="Synthesis of IP2, IP, and Ins in the cytosol"/>
</dbReference>
<dbReference type="SignaLink" id="Q96QG7"/>
<dbReference type="BioGRID-ORCS" id="66036">
    <property type="hits" value="38 hits in 1187 CRISPR screens"/>
</dbReference>
<dbReference type="ChiTaRS" id="MTMR9">
    <property type="organism name" value="human"/>
</dbReference>
<dbReference type="GeneWiki" id="MTMR9"/>
<dbReference type="GenomeRNAi" id="66036"/>
<dbReference type="Pharos" id="Q96QG7">
    <property type="development level" value="Tbio"/>
</dbReference>
<dbReference type="PRO" id="PR:Q96QG7"/>
<dbReference type="Proteomes" id="UP000005640">
    <property type="component" value="Chromosome 8"/>
</dbReference>
<dbReference type="RNAct" id="Q96QG7">
    <property type="molecule type" value="protein"/>
</dbReference>
<dbReference type="Bgee" id="ENSG00000104643">
    <property type="expression patterns" value="Expressed in endothelial cell and 209 other cell types or tissues"/>
</dbReference>
<dbReference type="ExpressionAtlas" id="Q96QG7">
    <property type="expression patterns" value="baseline and differential"/>
</dbReference>
<dbReference type="GO" id="GO:0005737">
    <property type="term" value="C:cytoplasm"/>
    <property type="evidence" value="ECO:0000314"/>
    <property type="project" value="UniProtKB"/>
</dbReference>
<dbReference type="GO" id="GO:0005829">
    <property type="term" value="C:cytosol"/>
    <property type="evidence" value="ECO:0000304"/>
    <property type="project" value="Reactome"/>
</dbReference>
<dbReference type="GO" id="GO:0005783">
    <property type="term" value="C:endoplasmic reticulum"/>
    <property type="evidence" value="ECO:0007669"/>
    <property type="project" value="UniProtKB-SubCell"/>
</dbReference>
<dbReference type="GO" id="GO:0048471">
    <property type="term" value="C:perinuclear region of cytoplasm"/>
    <property type="evidence" value="ECO:0007669"/>
    <property type="project" value="UniProtKB-SubCell"/>
</dbReference>
<dbReference type="GO" id="GO:0032991">
    <property type="term" value="C:protein-containing complex"/>
    <property type="evidence" value="ECO:0000314"/>
    <property type="project" value="UniProtKB"/>
</dbReference>
<dbReference type="GO" id="GO:0032587">
    <property type="term" value="C:ruffle membrane"/>
    <property type="evidence" value="ECO:0007669"/>
    <property type="project" value="UniProtKB-SubCell"/>
</dbReference>
<dbReference type="GO" id="GO:0030234">
    <property type="term" value="F:enzyme regulator activity"/>
    <property type="evidence" value="ECO:0007669"/>
    <property type="project" value="Ensembl"/>
</dbReference>
<dbReference type="GO" id="GO:0019903">
    <property type="term" value="F:protein phosphatase binding"/>
    <property type="evidence" value="ECO:0000353"/>
    <property type="project" value="UniProtKB"/>
</dbReference>
<dbReference type="GO" id="GO:0006897">
    <property type="term" value="P:endocytosis"/>
    <property type="evidence" value="ECO:0007669"/>
    <property type="project" value="UniProtKB-KW"/>
</dbReference>
<dbReference type="GO" id="GO:0010507">
    <property type="term" value="P:negative regulation of autophagy"/>
    <property type="evidence" value="ECO:0000353"/>
    <property type="project" value="UniProtKB"/>
</dbReference>
<dbReference type="GO" id="GO:0046856">
    <property type="term" value="P:phosphatidylinositol dephosphorylation"/>
    <property type="evidence" value="ECO:0000318"/>
    <property type="project" value="GO_Central"/>
</dbReference>
<dbReference type="GO" id="GO:0010922">
    <property type="term" value="P:positive regulation of phosphatase activity"/>
    <property type="evidence" value="ECO:0000314"/>
    <property type="project" value="UniProtKB"/>
</dbReference>
<dbReference type="GO" id="GO:0050821">
    <property type="term" value="P:protein stabilization"/>
    <property type="evidence" value="ECO:0000314"/>
    <property type="project" value="UniProtKB"/>
</dbReference>
<dbReference type="GO" id="GO:0060304">
    <property type="term" value="P:regulation of phosphatidylinositol dephosphorylation"/>
    <property type="evidence" value="ECO:0000314"/>
    <property type="project" value="UniProtKB"/>
</dbReference>
<dbReference type="CDD" id="cd13211">
    <property type="entry name" value="PH-GRAM_MTMR9"/>
    <property type="match status" value="1"/>
</dbReference>
<dbReference type="CDD" id="cd14536">
    <property type="entry name" value="PTP-MTMR9"/>
    <property type="match status" value="1"/>
</dbReference>
<dbReference type="FunFam" id="2.30.29.30:FF:000240">
    <property type="entry name" value="Myotubularin-related protein 9"/>
    <property type="match status" value="1"/>
</dbReference>
<dbReference type="Gene3D" id="2.30.29.30">
    <property type="entry name" value="Pleckstrin-homology domain (PH domain)/Phosphotyrosine-binding domain (PTB)"/>
    <property type="match status" value="1"/>
</dbReference>
<dbReference type="InterPro" id="IPR030564">
    <property type="entry name" value="Myotubularin"/>
</dbReference>
<dbReference type="InterPro" id="IPR010569">
    <property type="entry name" value="Myotubularin-like_Pase_dom"/>
</dbReference>
<dbReference type="InterPro" id="IPR011993">
    <property type="entry name" value="PH-like_dom_sf"/>
</dbReference>
<dbReference type="InterPro" id="IPR029021">
    <property type="entry name" value="Prot-tyrosine_phosphatase-like"/>
</dbReference>
<dbReference type="PANTHER" id="PTHR10807">
    <property type="entry name" value="MYOTUBULARIN-RELATED"/>
    <property type="match status" value="1"/>
</dbReference>
<dbReference type="PANTHER" id="PTHR10807:SF56">
    <property type="entry name" value="MYOTUBULARIN-RELATED PROTEIN 9"/>
    <property type="match status" value="1"/>
</dbReference>
<dbReference type="Pfam" id="PF06602">
    <property type="entry name" value="Myotub-related"/>
    <property type="match status" value="1"/>
</dbReference>
<dbReference type="Pfam" id="PF21098">
    <property type="entry name" value="PH-GRAM_MTMR6-like"/>
    <property type="match status" value="1"/>
</dbReference>
<dbReference type="SUPFAM" id="SSF52799">
    <property type="entry name" value="(Phosphotyrosine protein) phosphatases II"/>
    <property type="match status" value="1"/>
</dbReference>
<dbReference type="SUPFAM" id="SSF50729">
    <property type="entry name" value="PH domain-like"/>
    <property type="match status" value="1"/>
</dbReference>
<dbReference type="PROSITE" id="PS51339">
    <property type="entry name" value="PPASE_MYOTUBULARIN"/>
    <property type="match status" value="1"/>
</dbReference>
<accession>Q96QG7</accession>
<accession>B7Z291</accession>
<accession>Q52LU3</accession>
<accession>Q8WW11</accession>
<accession>Q96QG6</accession>
<accession>Q9NX50</accession>
<organism>
    <name type="scientific">Homo sapiens</name>
    <name type="common">Human</name>
    <dbReference type="NCBI Taxonomy" id="9606"/>
    <lineage>
        <taxon>Eukaryota</taxon>
        <taxon>Metazoa</taxon>
        <taxon>Chordata</taxon>
        <taxon>Craniata</taxon>
        <taxon>Vertebrata</taxon>
        <taxon>Euteleostomi</taxon>
        <taxon>Mammalia</taxon>
        <taxon>Eutheria</taxon>
        <taxon>Euarchontoglires</taxon>
        <taxon>Primates</taxon>
        <taxon>Haplorrhini</taxon>
        <taxon>Catarrhini</taxon>
        <taxon>Hominidae</taxon>
        <taxon>Homo</taxon>
    </lineage>
</organism>
<evidence type="ECO:0000250" key="1">
    <source>
        <dbReference type="UniProtKB" id="Q9Z2D0"/>
    </source>
</evidence>
<evidence type="ECO:0000255" key="2"/>
<evidence type="ECO:0000255" key="3">
    <source>
        <dbReference type="PROSITE-ProRule" id="PRU00669"/>
    </source>
</evidence>
<evidence type="ECO:0000269" key="4">
    <source>
    </source>
</evidence>
<evidence type="ECO:0000269" key="5">
    <source>
    </source>
</evidence>
<evidence type="ECO:0000269" key="6">
    <source>
    </source>
</evidence>
<evidence type="ECO:0000269" key="7">
    <source>
    </source>
</evidence>
<evidence type="ECO:0000269" key="8">
    <source>
    </source>
</evidence>
<evidence type="ECO:0000269" key="9">
    <source>
    </source>
</evidence>
<evidence type="ECO:0000269" key="10">
    <source>
    </source>
</evidence>
<evidence type="ECO:0000269" key="11">
    <source>
    </source>
</evidence>
<evidence type="ECO:0000303" key="12">
    <source>
    </source>
</evidence>
<evidence type="ECO:0000305" key="13"/>
<evidence type="ECO:0007744" key="14">
    <source>
    </source>
</evidence>
<evidence type="ECO:0007744" key="15">
    <source>
    </source>
</evidence>
<evidence type="ECO:0007744" key="16">
    <source>
    </source>
</evidence>
<evidence type="ECO:0007744" key="17">
    <source>
    </source>
</evidence>
<evidence type="ECO:0007744" key="18">
    <source>
    </source>
</evidence>
<evidence type="ECO:0007744" key="19">
    <source>
    </source>
</evidence>
<evidence type="ECO:0007744" key="20">
    <source>
    </source>
</evidence>
<protein>
    <recommendedName>
        <fullName>Myotubularin-related protein 9</fullName>
    </recommendedName>
    <alternativeName>
        <fullName evidence="13">Inactive phosphatidylinositol 3-phosphatase 9</fullName>
    </alternativeName>
</protein>
<feature type="chain" id="PRO_0000094943" description="Myotubularin-related protein 9">
    <location>
        <begin position="1"/>
        <end position="549"/>
    </location>
</feature>
<feature type="domain" description="GRAM" evidence="2">
    <location>
        <begin position="4"/>
        <end position="99"/>
    </location>
</feature>
<feature type="domain" description="Myotubularin phosphatase" evidence="3">
    <location>
        <begin position="123"/>
        <end position="498"/>
    </location>
</feature>
<feature type="coiled-coil region" evidence="2">
    <location>
        <begin position="508"/>
        <end position="542"/>
    </location>
</feature>
<feature type="modified residue" description="N-acetylmethionine" evidence="18 19">
    <location>
        <position position="1"/>
    </location>
</feature>
<feature type="modified residue" description="Phosphoserine" evidence="14 15 16 17 20">
    <location>
        <position position="548"/>
    </location>
</feature>
<feature type="splice variant" id="VSP_056209" description="In isoform 2." evidence="12">
    <location>
        <begin position="1"/>
        <end position="85"/>
    </location>
</feature>
<feature type="sequence variant" id="VAR_082147" description="Found in a patient with global developmental delay, spasticity and epilepsy; uncertain significance." evidence="11">
    <original>N</original>
    <variation>I</variation>
    <location>
        <position position="472"/>
    </location>
</feature>
<feature type="sequence conflict" description="In Ref. 2; BAA91170." evidence="13" ref="2">
    <original>K</original>
    <variation>R</variation>
    <location>
        <position position="194"/>
    </location>
</feature>
<feature type="sequence conflict" description="In Ref. 4; AAH22003." evidence="13" ref="4">
    <original>Q</original>
    <variation>L</variation>
    <location>
        <position position="382"/>
    </location>
</feature>
<keyword id="KW-0007">Acetylation</keyword>
<keyword id="KW-0025">Alternative splicing</keyword>
<keyword id="KW-1003">Cell membrane</keyword>
<keyword id="KW-0966">Cell projection</keyword>
<keyword id="KW-0175">Coiled coil</keyword>
<keyword id="KW-0963">Cytoplasm</keyword>
<keyword id="KW-0254">Endocytosis</keyword>
<keyword id="KW-0256">Endoplasmic reticulum</keyword>
<keyword id="KW-0472">Membrane</keyword>
<keyword id="KW-0597">Phosphoprotein</keyword>
<keyword id="KW-1267">Proteomics identification</keyword>
<keyword id="KW-1185">Reference proteome</keyword>
<reference key="1">
    <citation type="journal article" date="2001" name="Genomics">
        <title>Identification and localization of a new human myotubularin-related protein gene, MTMR8, on 8p22-p23.</title>
        <authorList>
            <person name="Appel S."/>
            <person name="Reichwald K."/>
            <person name="Zimmermann W."/>
            <person name="Reis A."/>
            <person name="Rosenthal A."/>
            <person name="Hennies H.C."/>
        </authorList>
    </citation>
    <scope>NUCLEOTIDE SEQUENCE [GENOMIC DNA / MRNA] (ISOFORM 1)</scope>
    <scope>TISSUE SPECIFICITY</scope>
</reference>
<reference key="2">
    <citation type="journal article" date="2004" name="Nat. Genet.">
        <title>Complete sequencing and characterization of 21,243 full-length human cDNAs.</title>
        <authorList>
            <person name="Ota T."/>
            <person name="Suzuki Y."/>
            <person name="Nishikawa T."/>
            <person name="Otsuki T."/>
            <person name="Sugiyama T."/>
            <person name="Irie R."/>
            <person name="Wakamatsu A."/>
            <person name="Hayashi K."/>
            <person name="Sato H."/>
            <person name="Nagai K."/>
            <person name="Kimura K."/>
            <person name="Makita H."/>
            <person name="Sekine M."/>
            <person name="Obayashi M."/>
            <person name="Nishi T."/>
            <person name="Shibahara T."/>
            <person name="Tanaka T."/>
            <person name="Ishii S."/>
            <person name="Yamamoto J."/>
            <person name="Saito K."/>
            <person name="Kawai Y."/>
            <person name="Isono Y."/>
            <person name="Nakamura Y."/>
            <person name="Nagahari K."/>
            <person name="Murakami K."/>
            <person name="Yasuda T."/>
            <person name="Iwayanagi T."/>
            <person name="Wagatsuma M."/>
            <person name="Shiratori A."/>
            <person name="Sudo H."/>
            <person name="Hosoiri T."/>
            <person name="Kaku Y."/>
            <person name="Kodaira H."/>
            <person name="Kondo H."/>
            <person name="Sugawara M."/>
            <person name="Takahashi M."/>
            <person name="Kanda K."/>
            <person name="Yokoi T."/>
            <person name="Furuya T."/>
            <person name="Kikkawa E."/>
            <person name="Omura Y."/>
            <person name="Abe K."/>
            <person name="Kamihara K."/>
            <person name="Katsuta N."/>
            <person name="Sato K."/>
            <person name="Tanikawa M."/>
            <person name="Yamazaki M."/>
            <person name="Ninomiya K."/>
            <person name="Ishibashi T."/>
            <person name="Yamashita H."/>
            <person name="Murakawa K."/>
            <person name="Fujimori K."/>
            <person name="Tanai H."/>
            <person name="Kimata M."/>
            <person name="Watanabe M."/>
            <person name="Hiraoka S."/>
            <person name="Chiba Y."/>
            <person name="Ishida S."/>
            <person name="Ono Y."/>
            <person name="Takiguchi S."/>
            <person name="Watanabe S."/>
            <person name="Yosida M."/>
            <person name="Hotuta T."/>
            <person name="Kusano J."/>
            <person name="Kanehori K."/>
            <person name="Takahashi-Fujii A."/>
            <person name="Hara H."/>
            <person name="Tanase T.-O."/>
            <person name="Nomura Y."/>
            <person name="Togiya S."/>
            <person name="Komai F."/>
            <person name="Hara R."/>
            <person name="Takeuchi K."/>
            <person name="Arita M."/>
            <person name="Imose N."/>
            <person name="Musashino K."/>
            <person name="Yuuki H."/>
            <person name="Oshima A."/>
            <person name="Sasaki N."/>
            <person name="Aotsuka S."/>
            <person name="Yoshikawa Y."/>
            <person name="Matsunawa H."/>
            <person name="Ichihara T."/>
            <person name="Shiohata N."/>
            <person name="Sano S."/>
            <person name="Moriya S."/>
            <person name="Momiyama H."/>
            <person name="Satoh N."/>
            <person name="Takami S."/>
            <person name="Terashima Y."/>
            <person name="Suzuki O."/>
            <person name="Nakagawa S."/>
            <person name="Senoh A."/>
            <person name="Mizoguchi H."/>
            <person name="Goto Y."/>
            <person name="Shimizu F."/>
            <person name="Wakebe H."/>
            <person name="Hishigaki H."/>
            <person name="Watanabe T."/>
            <person name="Sugiyama A."/>
            <person name="Takemoto M."/>
            <person name="Kawakami B."/>
            <person name="Yamazaki M."/>
            <person name="Watanabe K."/>
            <person name="Kumagai A."/>
            <person name="Itakura S."/>
            <person name="Fukuzumi Y."/>
            <person name="Fujimori Y."/>
            <person name="Komiyama M."/>
            <person name="Tashiro H."/>
            <person name="Tanigami A."/>
            <person name="Fujiwara T."/>
            <person name="Ono T."/>
            <person name="Yamada K."/>
            <person name="Fujii Y."/>
            <person name="Ozaki K."/>
            <person name="Hirao M."/>
            <person name="Ohmori Y."/>
            <person name="Kawabata A."/>
            <person name="Hikiji T."/>
            <person name="Kobatake N."/>
            <person name="Inagaki H."/>
            <person name="Ikema Y."/>
            <person name="Okamoto S."/>
            <person name="Okitani R."/>
            <person name="Kawakami T."/>
            <person name="Noguchi S."/>
            <person name="Itoh T."/>
            <person name="Shigeta K."/>
            <person name="Senba T."/>
            <person name="Matsumura K."/>
            <person name="Nakajima Y."/>
            <person name="Mizuno T."/>
            <person name="Morinaga M."/>
            <person name="Sasaki M."/>
            <person name="Togashi T."/>
            <person name="Oyama M."/>
            <person name="Hata H."/>
            <person name="Watanabe M."/>
            <person name="Komatsu T."/>
            <person name="Mizushima-Sugano J."/>
            <person name="Satoh T."/>
            <person name="Shirai Y."/>
            <person name="Takahashi Y."/>
            <person name="Nakagawa K."/>
            <person name="Okumura K."/>
            <person name="Nagase T."/>
            <person name="Nomura N."/>
            <person name="Kikuchi H."/>
            <person name="Masuho Y."/>
            <person name="Yamashita R."/>
            <person name="Nakai K."/>
            <person name="Yada T."/>
            <person name="Nakamura Y."/>
            <person name="Ohara O."/>
            <person name="Isogai T."/>
            <person name="Sugano S."/>
        </authorList>
    </citation>
    <scope>NUCLEOTIDE SEQUENCE [LARGE SCALE MRNA] (ISOFORMS 1 AND 2)</scope>
    <source>
        <tissue>Amygdala</tissue>
    </source>
</reference>
<reference key="3">
    <citation type="journal article" date="2006" name="Nature">
        <title>DNA sequence and analysis of human chromosome 8.</title>
        <authorList>
            <person name="Nusbaum C."/>
            <person name="Mikkelsen T.S."/>
            <person name="Zody M.C."/>
            <person name="Asakawa S."/>
            <person name="Taudien S."/>
            <person name="Garber M."/>
            <person name="Kodira C.D."/>
            <person name="Schueler M.G."/>
            <person name="Shimizu A."/>
            <person name="Whittaker C.A."/>
            <person name="Chang J.L."/>
            <person name="Cuomo C.A."/>
            <person name="Dewar K."/>
            <person name="FitzGerald M.G."/>
            <person name="Yang X."/>
            <person name="Allen N.R."/>
            <person name="Anderson S."/>
            <person name="Asakawa T."/>
            <person name="Blechschmidt K."/>
            <person name="Bloom T."/>
            <person name="Borowsky M.L."/>
            <person name="Butler J."/>
            <person name="Cook A."/>
            <person name="Corum B."/>
            <person name="DeArellano K."/>
            <person name="DeCaprio D."/>
            <person name="Dooley K.T."/>
            <person name="Dorris L. III"/>
            <person name="Engels R."/>
            <person name="Gloeckner G."/>
            <person name="Hafez N."/>
            <person name="Hagopian D.S."/>
            <person name="Hall J.L."/>
            <person name="Ishikawa S.K."/>
            <person name="Jaffe D.B."/>
            <person name="Kamat A."/>
            <person name="Kudoh J."/>
            <person name="Lehmann R."/>
            <person name="Lokitsang T."/>
            <person name="Macdonald P."/>
            <person name="Major J.E."/>
            <person name="Matthews C.D."/>
            <person name="Mauceli E."/>
            <person name="Menzel U."/>
            <person name="Mihalev A.H."/>
            <person name="Minoshima S."/>
            <person name="Murayama Y."/>
            <person name="Naylor J.W."/>
            <person name="Nicol R."/>
            <person name="Nguyen C."/>
            <person name="O'Leary S.B."/>
            <person name="O'Neill K."/>
            <person name="Parker S.C.J."/>
            <person name="Polley A."/>
            <person name="Raymond C.K."/>
            <person name="Reichwald K."/>
            <person name="Rodriguez J."/>
            <person name="Sasaki T."/>
            <person name="Schilhabel M."/>
            <person name="Siddiqui R."/>
            <person name="Smith C.L."/>
            <person name="Sneddon T.P."/>
            <person name="Talamas J.A."/>
            <person name="Tenzin P."/>
            <person name="Topham K."/>
            <person name="Venkataraman V."/>
            <person name="Wen G."/>
            <person name="Yamazaki S."/>
            <person name="Young S.K."/>
            <person name="Zeng Q."/>
            <person name="Zimmer A.R."/>
            <person name="Rosenthal A."/>
            <person name="Birren B.W."/>
            <person name="Platzer M."/>
            <person name="Shimizu N."/>
            <person name="Lander E.S."/>
        </authorList>
    </citation>
    <scope>NUCLEOTIDE SEQUENCE [LARGE SCALE GENOMIC DNA]</scope>
</reference>
<reference key="4">
    <citation type="journal article" date="2004" name="Genome Res.">
        <title>The status, quality, and expansion of the NIH full-length cDNA project: the Mammalian Gene Collection (MGC).</title>
        <authorList>
            <consortium name="The MGC Project Team"/>
        </authorList>
    </citation>
    <scope>NUCLEOTIDE SEQUENCE [LARGE SCALE MRNA] (ISOFORM 1)</scope>
    <source>
        <tissue>Liver</tissue>
        <tissue>Testis</tissue>
    </source>
</reference>
<reference key="5">
    <citation type="journal article" date="2003" name="Proc. Natl. Acad. Sci. U.S.A.">
        <title>Characterization of myotubularin-related protein 7 and its binding partner, myotubularin-related protein 9.</title>
        <authorList>
            <person name="Mochizuki Y."/>
            <person name="Majerus P.W."/>
        </authorList>
    </citation>
    <scope>INTERACTION WITH MTMR6</scope>
</reference>
<reference key="6">
    <citation type="journal article" date="2006" name="J. Cell Sci.">
        <title>Systematic analysis of myotubularins: heteromeric interactions, subcellular localisation and endosome related functions.</title>
        <authorList>
            <person name="Lorenzo O."/>
            <person name="Urbe S."/>
            <person name="Clague M.J."/>
        </authorList>
    </citation>
    <scope>INTERACTION WITH MTMR6 AND MTMR8</scope>
    <scope>SUBCELLULAR LOCATION</scope>
</reference>
<reference key="7">
    <citation type="journal article" date="2008" name="Proc. Natl. Acad. Sci. U.S.A.">
        <title>A quantitative atlas of mitotic phosphorylation.</title>
        <authorList>
            <person name="Dephoure N."/>
            <person name="Zhou C."/>
            <person name="Villen J."/>
            <person name="Beausoleil S.A."/>
            <person name="Bakalarski C.E."/>
            <person name="Elledge S.J."/>
            <person name="Gygi S.P."/>
        </authorList>
    </citation>
    <scope>PHOSPHORYLATION [LARGE SCALE ANALYSIS] AT SER-548</scope>
    <scope>IDENTIFICATION BY MASS SPECTROMETRY [LARGE SCALE ANALYSIS]</scope>
    <source>
        <tissue>Cervix carcinoma</tissue>
    </source>
</reference>
<reference key="8">
    <citation type="journal article" date="2009" name="J. Biol. Chem.">
        <title>MTMR9 increases MTMR6 enzyme activity, stability, and role in apoptosis.</title>
        <authorList>
            <person name="Zou J."/>
            <person name="Chang S.C."/>
            <person name="Marjanovic J."/>
            <person name="Majerus P.W."/>
        </authorList>
    </citation>
    <scope>FUNCTION</scope>
    <scope>INTERACTION WITH MTMR6</scope>
    <scope>SUBUNIT</scope>
    <scope>SUBCELLULAR LOCATION</scope>
</reference>
<reference key="9">
    <citation type="journal article" date="2009" name="Anal. Chem.">
        <title>Lys-N and trypsin cover complementary parts of the phosphoproteome in a refined SCX-based approach.</title>
        <authorList>
            <person name="Gauci S."/>
            <person name="Helbig A.O."/>
            <person name="Slijper M."/>
            <person name="Krijgsveld J."/>
            <person name="Heck A.J."/>
            <person name="Mohammed S."/>
        </authorList>
    </citation>
    <scope>IDENTIFICATION BY MASS SPECTROMETRY [LARGE SCALE ANALYSIS]</scope>
</reference>
<reference key="10">
    <citation type="journal article" date="2009" name="Sci. Signal.">
        <title>Quantitative phosphoproteomic analysis of T cell receptor signaling reveals system-wide modulation of protein-protein interactions.</title>
        <authorList>
            <person name="Mayya V."/>
            <person name="Lundgren D.H."/>
            <person name="Hwang S.-I."/>
            <person name="Rezaul K."/>
            <person name="Wu L."/>
            <person name="Eng J.K."/>
            <person name="Rodionov V."/>
            <person name="Han D.K."/>
        </authorList>
    </citation>
    <scope>PHOSPHORYLATION [LARGE SCALE ANALYSIS] AT SER-548</scope>
    <scope>IDENTIFICATION BY MASS SPECTROMETRY [LARGE SCALE ANALYSIS]</scope>
    <source>
        <tissue>Leukemic T-cell</tissue>
    </source>
</reference>
<reference key="11">
    <citation type="journal article" date="2010" name="Sci. Signal.">
        <title>Quantitative phosphoproteomics reveals widespread full phosphorylation site occupancy during mitosis.</title>
        <authorList>
            <person name="Olsen J.V."/>
            <person name="Vermeulen M."/>
            <person name="Santamaria A."/>
            <person name="Kumar C."/>
            <person name="Miller M.L."/>
            <person name="Jensen L.J."/>
            <person name="Gnad F."/>
            <person name="Cox J."/>
            <person name="Jensen T.S."/>
            <person name="Nigg E.A."/>
            <person name="Brunak S."/>
            <person name="Mann M."/>
        </authorList>
    </citation>
    <scope>PHOSPHORYLATION [LARGE SCALE ANALYSIS] AT SER-548</scope>
    <scope>IDENTIFICATION BY MASS SPECTROMETRY [LARGE SCALE ANALYSIS]</scope>
    <source>
        <tissue>Cervix carcinoma</tissue>
    </source>
</reference>
<reference key="12">
    <citation type="journal article" date="2011" name="BMC Syst. Biol.">
        <title>Initial characterization of the human central proteome.</title>
        <authorList>
            <person name="Burkard T.R."/>
            <person name="Planyavsky M."/>
            <person name="Kaupe I."/>
            <person name="Breitwieser F.P."/>
            <person name="Buerckstuemmer T."/>
            <person name="Bennett K.L."/>
            <person name="Superti-Furga G."/>
            <person name="Colinge J."/>
        </authorList>
    </citation>
    <scope>IDENTIFICATION BY MASS SPECTROMETRY [LARGE SCALE ANALYSIS]</scope>
</reference>
<reference key="13">
    <citation type="journal article" date="2012" name="Proc. Natl. Acad. Sci. U.S.A.">
        <title>Myotubularin-related protein (MTMR) 9 determines the enzymatic activity, substrate specificity, and role in autophagy of MTMR8.</title>
        <authorList>
            <person name="Zou J."/>
            <person name="Zhang C."/>
            <person name="Marjanovic J."/>
            <person name="Kisseleva M.V."/>
            <person name="Majerus P.W."/>
            <person name="Wilson M.P."/>
        </authorList>
    </citation>
    <scope>FUNCTION</scope>
    <scope>INTERACTION WITH MTMR8</scope>
</reference>
<reference key="14">
    <citation type="journal article" date="2011" name="Sci. Signal.">
        <title>System-wide temporal characterization of the proteome and phosphoproteome of human embryonic stem cell differentiation.</title>
        <authorList>
            <person name="Rigbolt K.T."/>
            <person name="Prokhorova T.A."/>
            <person name="Akimov V."/>
            <person name="Henningsen J."/>
            <person name="Johansen P.T."/>
            <person name="Kratchmarova I."/>
            <person name="Kassem M."/>
            <person name="Mann M."/>
            <person name="Olsen J.V."/>
            <person name="Blagoev B."/>
        </authorList>
    </citation>
    <scope>PHOSPHORYLATION [LARGE SCALE ANALYSIS] AT SER-548</scope>
    <scope>IDENTIFICATION BY MASS SPECTROMETRY [LARGE SCALE ANALYSIS]</scope>
</reference>
<reference key="15">
    <citation type="journal article" date="2013" name="J. Biol. Chem.">
        <title>Phosphatidylinositol 3-phosphatase myotubularin-related protein 6 (MTMR6) is regulated by small GTPase Rab1B in the early secretory and autophagic pathways.</title>
        <authorList>
            <person name="Mochizuki Y."/>
            <person name="Ohashi R."/>
            <person name="Kawamura T."/>
            <person name="Iwanari H."/>
            <person name="Kodama T."/>
            <person name="Naito M."/>
            <person name="Hamakubo T."/>
        </authorList>
    </citation>
    <scope>INTERACTION WITH MTMR6</scope>
    <scope>IDENTIFICATION BY MASS SPECTROMETRY</scope>
</reference>
<reference key="16">
    <citation type="journal article" date="2012" name="Mol. Cell. Proteomics">
        <title>Comparative large-scale characterisation of plant vs. mammal proteins reveals similar and idiosyncratic N-alpha acetylation features.</title>
        <authorList>
            <person name="Bienvenut W.V."/>
            <person name="Sumpton D."/>
            <person name="Martinez A."/>
            <person name="Lilla S."/>
            <person name="Espagne C."/>
            <person name="Meinnel T."/>
            <person name="Giglione C."/>
        </authorList>
    </citation>
    <scope>ACETYLATION [LARGE SCALE ANALYSIS] AT MET-1</scope>
    <scope>IDENTIFICATION BY MASS SPECTROMETRY [LARGE SCALE ANALYSIS]</scope>
</reference>
<reference key="17">
    <citation type="journal article" date="2012" name="Proc. Natl. Acad. Sci. U.S.A.">
        <title>N-terminal acetylome analyses and functional insights of the N-terminal acetyltransferase NatB.</title>
        <authorList>
            <person name="Van Damme P."/>
            <person name="Lasa M."/>
            <person name="Polevoda B."/>
            <person name="Gazquez C."/>
            <person name="Elosegui-Artola A."/>
            <person name="Kim D.S."/>
            <person name="De Juan-Pardo E."/>
            <person name="Demeyer K."/>
            <person name="Hole K."/>
            <person name="Larrea E."/>
            <person name="Timmerman E."/>
            <person name="Prieto J."/>
            <person name="Arnesen T."/>
            <person name="Sherman F."/>
            <person name="Gevaert K."/>
            <person name="Aldabe R."/>
        </authorList>
    </citation>
    <scope>ACETYLATION [LARGE SCALE ANALYSIS] AT MET-1</scope>
    <scope>IDENTIFICATION BY MASS SPECTROMETRY [LARGE SCALE ANALYSIS]</scope>
</reference>
<reference key="18">
    <citation type="journal article" date="2013" name="J. Proteome Res.">
        <title>Toward a comprehensive characterization of a human cancer cell phosphoproteome.</title>
        <authorList>
            <person name="Zhou H."/>
            <person name="Di Palma S."/>
            <person name="Preisinger C."/>
            <person name="Peng M."/>
            <person name="Polat A.N."/>
            <person name="Heck A.J."/>
            <person name="Mohammed S."/>
        </authorList>
    </citation>
    <scope>PHOSPHORYLATION [LARGE SCALE ANALYSIS] AT SER-548</scope>
    <scope>IDENTIFICATION BY MASS SPECTROMETRY [LARGE SCALE ANALYSIS]</scope>
    <source>
        <tissue>Erythroleukemia</tissue>
    </source>
</reference>
<reference key="19">
    <citation type="journal article" date="2014" name="Proc. Natl. Acad. Sci. U.S.A.">
        <title>Sequential breakdown of 3-phosphorylated phosphoinositides is essential for the completion of macropinocytosis.</title>
        <authorList>
            <person name="Maekawa M."/>
            <person name="Terasaka S."/>
            <person name="Mochizuki Y."/>
            <person name="Kawai K."/>
            <person name="Ikeda Y."/>
            <person name="Araki N."/>
            <person name="Skolnik E.Y."/>
            <person name="Taguchi T."/>
            <person name="Arai H."/>
        </authorList>
    </citation>
    <scope>FUNCTION</scope>
</reference>
<reference key="20">
    <citation type="journal article" date="2019" name="Genet. Med.">
        <title>Autozygome and high throughput confirmation of disease genes candidacy.</title>
        <authorList>
            <person name="Maddirevula S."/>
            <person name="Alzahrani F."/>
            <person name="Al-Owain M."/>
            <person name="Al Muhaizea M.A."/>
            <person name="Kayyali H.R."/>
            <person name="AlHashem A."/>
            <person name="Rahbeeni Z."/>
            <person name="Al-Otaibi M."/>
            <person name="Alzaidan H.I."/>
            <person name="Balobaid A."/>
            <person name="El Khashab H.Y."/>
            <person name="Bubshait D.K."/>
            <person name="Faden M."/>
            <person name="Yamani S.A."/>
            <person name="Dabbagh O."/>
            <person name="Al-Mureikhi M."/>
            <person name="Jasser A.A."/>
            <person name="Alsaif H.S."/>
            <person name="Alluhaydan I."/>
            <person name="Seidahmed M.Z."/>
            <person name="Alabbasi B.H."/>
            <person name="Almogarri I."/>
            <person name="Kurdi W."/>
            <person name="Akleh H."/>
            <person name="Qari A."/>
            <person name="Al Tala S.M."/>
            <person name="Alhomaidi S."/>
            <person name="Kentab A.Y."/>
            <person name="Salih M.A."/>
            <person name="Chedrawi A."/>
            <person name="Alameer S."/>
            <person name="Tabarki B."/>
            <person name="Shamseldin H.E."/>
            <person name="Patel N."/>
            <person name="Ibrahim N."/>
            <person name="Abdulwahab F."/>
            <person name="Samira M."/>
            <person name="Goljan E."/>
            <person name="Abouelhoda M."/>
            <person name="Meyer B.F."/>
            <person name="Hashem M."/>
            <person name="Shaheen R."/>
            <person name="AlShahwan S."/>
            <person name="Alfadhel M."/>
            <person name="Ben-Omran T."/>
            <person name="Al-Qattan M.M."/>
            <person name="Monies D."/>
            <person name="Alkuraya F.S."/>
        </authorList>
    </citation>
    <scope>VARIANT ILE-472</scope>
</reference>
<name>MTMR9_HUMAN</name>
<comment type="function">
    <text evidence="1 7 8 10">Acts as an adapter for myotubularin-related phosphatases (PubMed:19038970, PubMed:22647598). Increases lipid phosphatase MTMR6 catalytic activity, specifically towards phosphatidylinositol 3,5-bisphosphate and MTMR6 binding affinity for phosphorylated phosphatidylinositols (PubMed:19038970, PubMed:22647598). Positively regulates lipid phosphatase MTMR7 catalytic activity (By similarity). Increases MTMR8 catalytic activity towards phosphatidylinositol 3-phosphate (PubMed:22647598). The formation of the MTMR6-MTMR9 complex, stabilizes both MTMR6 and MTMR9 protein levels (PubMed:19038970). Stabilizes MTMR8 protein levels (PubMed:22647598). Plays a role in the late stages of macropinocytosis possibly by regulating MTMR6-mediated dephosphorylation of phosphatidylinositol 3-phosphate in membrane ruffles (PubMed:24591580). Negatively regulates autophagy, in part via its association with MTMR8 (PubMed:22647598). Negatively regulates DNA damage-induced apoptosis, in part via its association with MTMR6 (PubMed:19038970, PubMed:22647598). Does not bind mono-, di- and tri-phosphorylated phosphatidylinositols, phosphatidic acid and phosphatidylserine (PubMed:19038970).</text>
</comment>
<comment type="subunit">
    <text evidence="1 5 6 7 8 9">Homodimer (PubMed:19038970). Heterodimer (via C-terminus) with lipid phosphatase MTMR6 (via C-terminus) (PubMed:12890864, PubMed:16787938, PubMed:19038970, PubMed:23188820). Heterodimer (via coiled coil domain) with lipid phosphatase MTMR7 (via C-terminus) (By similarity). Heterodimer with lipid phosphatase MTMR8 (PubMed:16787938, PubMed:22647598).</text>
</comment>
<comment type="interaction">
    <interactant intactId="EBI-744593">
        <id>Q96QG7</id>
    </interactant>
    <interactant intactId="EBI-12366971">
        <id>O75140-2</id>
        <label>DEPDC5</label>
    </interactant>
    <organismsDiffer>false</organismsDiffer>
    <experiments>3</experiments>
</comment>
<comment type="interaction">
    <interactant intactId="EBI-744593">
        <id>Q96QG7</id>
    </interactant>
    <interactant intactId="EBI-744586">
        <id>Q9Y6C2</id>
        <label>EMILIN1</label>
    </interactant>
    <organismsDiffer>false</organismsDiffer>
    <experiments>10</experiments>
</comment>
<comment type="interaction">
    <interactant intactId="EBI-744593">
        <id>Q96QG7</id>
    </interactant>
    <interactant intactId="EBI-11748557">
        <id>Q9Y6C2-2</id>
        <label>EMILIN1</label>
    </interactant>
    <organismsDiffer>false</organismsDiffer>
    <experiments>3</experiments>
</comment>
<comment type="interaction">
    <interactant intactId="EBI-744593">
        <id>Q96QG7</id>
    </interactant>
    <interactant intactId="EBI-1220497">
        <id>Q9Y6X4</id>
        <label>FAM169A</label>
    </interactant>
    <organismsDiffer>false</organismsDiffer>
    <experiments>3</experiments>
</comment>
<comment type="interaction">
    <interactant intactId="EBI-744593">
        <id>Q96QG7</id>
    </interactant>
    <interactant intactId="EBI-10962409">
        <id>Q6IC98</id>
        <label>GRAMD4</label>
    </interactant>
    <organismsDiffer>false</organismsDiffer>
    <experiments>3</experiments>
</comment>
<comment type="interaction">
    <interactant intactId="EBI-744593">
        <id>Q96QG7</id>
    </interactant>
    <interactant intactId="EBI-6509505">
        <id>Q0VD86</id>
        <label>INCA1</label>
    </interactant>
    <organismsDiffer>false</organismsDiffer>
    <experiments>3</experiments>
</comment>
<comment type="interaction">
    <interactant intactId="EBI-744593">
        <id>Q96QG7</id>
    </interactant>
    <interactant intactId="EBI-3437878">
        <id>Q86T90</id>
        <label>KIAA1328</label>
    </interactant>
    <organismsDiffer>false</organismsDiffer>
    <experiments>3</experiments>
</comment>
<comment type="interaction">
    <interactant intactId="EBI-744593">
        <id>Q96QG7</id>
    </interactant>
    <interactant intactId="EBI-3044087">
        <id>Q7Z3Y8</id>
        <label>KRT27</label>
    </interactant>
    <organismsDiffer>false</organismsDiffer>
    <experiments>3</experiments>
</comment>
<comment type="interaction">
    <interactant intactId="EBI-744593">
        <id>Q96QG7</id>
    </interactant>
    <interactant intactId="EBI-739832">
        <id>Q8TBB1</id>
        <label>LNX1</label>
    </interactant>
    <organismsDiffer>false</organismsDiffer>
    <experiments>5</experiments>
</comment>
<comment type="interaction">
    <interactant intactId="EBI-744593">
        <id>Q96QG7</id>
    </interactant>
    <interactant intactId="EBI-19944212">
        <id>A8MW99</id>
        <label>MEI4</label>
    </interactant>
    <organismsDiffer>false</organismsDiffer>
    <experiments>3</experiments>
</comment>
<comment type="interaction">
    <interactant intactId="EBI-744593">
        <id>Q96QG7</id>
    </interactant>
    <interactant intactId="EBI-1757866">
        <id>P00540</id>
        <label>MOS</label>
    </interactant>
    <organismsDiffer>false</organismsDiffer>
    <experiments>6</experiments>
</comment>
<comment type="interaction">
    <interactant intactId="EBI-744593">
        <id>Q96QG7</id>
    </interactant>
    <interactant intactId="EBI-766064">
        <id>Q9Y217</id>
        <label>MTMR6</label>
    </interactant>
    <organismsDiffer>false</organismsDiffer>
    <experiments>14</experiments>
</comment>
<comment type="interaction">
    <interactant intactId="EBI-744593">
        <id>Q96QG7</id>
    </interactant>
    <interactant intactId="EBI-10293003">
        <id>Q9Y216</id>
        <label>MTMR7</label>
    </interactant>
    <organismsDiffer>false</organismsDiffer>
    <experiments>16</experiments>
</comment>
<comment type="interaction">
    <interactant intactId="EBI-744593">
        <id>Q96QG7</id>
    </interactant>
    <interactant intactId="EBI-750578">
        <id>Q96EF0</id>
        <label>MTMR8</label>
    </interactant>
    <organismsDiffer>false</organismsDiffer>
    <experiments>8</experiments>
</comment>
<comment type="interaction">
    <interactant intactId="EBI-744593">
        <id>Q96QG7</id>
    </interactant>
    <interactant intactId="EBI-15985865">
        <id>Q96EF0-1</id>
        <label>MTMR8</label>
    </interactant>
    <organismsDiffer>false</organismsDiffer>
    <experiments>3</experiments>
</comment>
<comment type="interaction">
    <interactant intactId="EBI-744593">
        <id>Q96QG7</id>
    </interactant>
    <interactant intactId="EBI-10172876">
        <id>Q7Z6G3-2</id>
        <label>NECAB2</label>
    </interactant>
    <organismsDiffer>false</organismsDiffer>
    <experiments>3</experiments>
</comment>
<comment type="interaction">
    <interactant intactId="EBI-744593">
        <id>Q96QG7</id>
    </interactant>
    <interactant intactId="EBI-372942">
        <id>Q13287</id>
        <label>NMI</label>
    </interactant>
    <organismsDiffer>false</organismsDiffer>
    <experiments>9</experiments>
</comment>
<comment type="interaction">
    <interactant intactId="EBI-744593">
        <id>Q96QG7</id>
    </interactant>
    <interactant intactId="EBI-1047946">
        <id>P26045</id>
        <label>PTPN3</label>
    </interactant>
    <organismsDiffer>false</organismsDiffer>
    <experiments>3</experiments>
</comment>
<comment type="interaction">
    <interactant intactId="EBI-744593">
        <id>Q96QG7</id>
    </interactant>
    <interactant intactId="EBI-2107455">
        <id>Q08AM6</id>
        <label>VAC14</label>
    </interactant>
    <organismsDiffer>false</organismsDiffer>
    <experiments>3</experiments>
</comment>
<comment type="interaction">
    <interactant intactId="EBI-744593">
        <id>Q96QG7</id>
    </interactant>
    <interactant intactId="EBI-625509">
        <id>Q8N720</id>
        <label>ZNF655</label>
    </interactant>
    <organismsDiffer>false</organismsDiffer>
    <experiments>3</experiments>
</comment>
<comment type="subcellular location">
    <subcellularLocation>
        <location evidence="6 7">Cytoplasm</location>
    </subcellularLocation>
    <subcellularLocation>
        <location evidence="1">Cell projection</location>
        <location evidence="1">Ruffle membrane</location>
        <topology evidence="13">Peripheral membrane protein</topology>
        <orientation evidence="13">Cytoplasmic side</orientation>
    </subcellularLocation>
    <subcellularLocation>
        <location evidence="6 7">Cytoplasm</location>
        <location evidence="6 7">Perinuclear region</location>
    </subcellularLocation>
    <subcellularLocation>
        <location evidence="7">Endoplasmic reticulum</location>
    </subcellularLocation>
    <text evidence="1 7">Localizes to ruffles during EGF-induced macropinocytosis (By similarity). Colocalizes with MTMR6 to the perinuclear region (PubMed:19038970). Partially localizes to the endoplasmic reticulum (PubMed:19038970).</text>
</comment>
<comment type="alternative products">
    <event type="alternative splicing"/>
    <isoform>
        <id>Q96QG7-1</id>
        <name>1</name>
        <sequence type="displayed"/>
    </isoform>
    <isoform>
        <id>Q96QG7-2</id>
        <name>2</name>
        <sequence type="described" ref="VSP_056209"/>
    </isoform>
</comment>
<comment type="tissue specificity">
    <text evidence="4">Expressed in many tissues.</text>
</comment>
<comment type="domain">
    <text evidence="1">The GRAM domain is required for cell membrane localization.</text>
</comment>
<comment type="domain">
    <text evidence="1">The coiled coil domain mediates interaction with MTMR9.</text>
</comment>
<comment type="similarity">
    <text evidence="13">Belongs to the protein-tyrosine phosphatase family. Non-receptor class myotubularin subfamily.</text>
</comment>
<comment type="caution">
    <text evidence="13">Although it belongs to the non-receptor class myotubularin subfamily, lacks the conserved active site cysteine residue at position 333 in the dsPTPase catalytic loop, suggesting that it has no phosphatase activity.</text>
</comment>
<sequence>MEFAELIKTPRVDNVVLHRPFYPAVEGTLCLTGHHLILSSRQDNTEELWLLHSNIDAIDKRFVGSLGTIIIKCKDFRIIQLDIPGMEECLNIASSIEALSTLDSITLMYPFFYRPMFEVIEDGWHSFLPEQEFELYSSATSEWRLSYVNKEFAVCPSYPPIVTVPKSIDDEALRKVATFRHGGRFPVLSYYHKKNGMVIMRSGQPLTGTNGRRCKEDEKLINATLRAGKRGYIIDTRSLNVAQQTRAKGGGFEQEAHYPQWRRIHKSIERYHILQESLIKLVEACNDQTHNMDRWLSKLEASNWLTHIKEILTTACLAAQCIDREGASILIHGTEGTDSTLQVTSLAQIILEPRSRTIRGFEALIEREWLQAGHPFQQRCAQSAYCNTKQKWEAPVFLLFLDCVWQILRQFPCSFEFNENFLIMLFEHAYASQFGTFLGNNESERCKLKLQQKTMSLWSWVNQPSELSKFTNPLFEANNLVIWPSVAPQSLPLWEGIFLRWNRSSKYLDEAYEEMVNIIEYNKELQAKVNILRRQLAELETEDGMQESP</sequence>
<gene>
    <name type="primary">MTMR9</name>
    <name type="synonym">C8orf9</name>
    <name type="synonym">MTMR8</name>
</gene>
<proteinExistence type="evidence at protein level"/>